<protein>
    <recommendedName>
        <fullName>Ovomucoid</fullName>
    </recommendedName>
</protein>
<reference key="1">
    <citation type="journal article" date="1987" name="Biochemistry">
        <title>Ovomucoid third domains from 100 avian species: isolation, sequences, and hypervariability of enzyme-inhibitor contact residues.</title>
        <authorList>
            <person name="Laskowski M. Jr."/>
            <person name="Kato I."/>
            <person name="Ardelt W."/>
            <person name="Cook J."/>
            <person name="Denton A."/>
            <person name="Empie M.W."/>
            <person name="Kohr W.J."/>
            <person name="Park S.J."/>
            <person name="Parks K."/>
            <person name="Schatzley B.L."/>
            <person name="Schoenberger O.L."/>
            <person name="Tashiro M."/>
            <person name="Vichot G."/>
            <person name="Whatley H.E."/>
            <person name="Wieczorek A."/>
            <person name="Wieczorek M."/>
        </authorList>
    </citation>
    <scope>PROTEIN SEQUENCE</scope>
</reference>
<comment type="subcellular location">
    <subcellularLocation>
        <location>Secreted</location>
    </subcellularLocation>
</comment>
<comment type="domain">
    <text>Avian ovomucoid consists of three homologous, tandem Kazal family inhibitory domains.</text>
</comment>
<name>IOVO_CIRAE</name>
<evidence type="ECO:0000255" key="1">
    <source>
        <dbReference type="PROSITE-ProRule" id="PRU00798"/>
    </source>
</evidence>
<evidence type="ECO:0000269" key="2">
    <source>
    </source>
</evidence>
<feature type="chain" id="PRO_0000073085" description="Ovomucoid">
    <location>
        <begin position="1" status="less than"/>
        <end position="54" status="greater than"/>
    </location>
</feature>
<feature type="domain" description="Kazal-like" evidence="1">
    <location>
        <begin position="4"/>
        <end position="54"/>
    </location>
</feature>
<feature type="site" description="Reactive bond 3">
    <location>
        <begin position="16"/>
        <end position="17"/>
    </location>
</feature>
<feature type="glycosylation site" description="N-linked (GlcNAc...) asparagine" evidence="2">
    <location>
        <position position="43"/>
    </location>
</feature>
<feature type="disulfide bond">
    <location>
        <begin position="6"/>
        <end position="36"/>
    </location>
</feature>
<feature type="disulfide bond">
    <location>
        <begin position="14"/>
        <end position="33"/>
    </location>
</feature>
<feature type="disulfide bond">
    <location>
        <begin position="22"/>
        <end position="54"/>
    </location>
</feature>
<feature type="non-terminal residue">
    <location>
        <position position="1"/>
    </location>
</feature>
<feature type="non-terminal residue">
    <location>
        <position position="54"/>
    </location>
</feature>
<sequence length="54" mass="5876">IAIVDCSDYPKPVCSLEYMPLCGSDSKTYSNKCDFCNAFVDSNGTLSLSHFGKC</sequence>
<keyword id="KW-0903">Direct protein sequencing</keyword>
<keyword id="KW-1015">Disulfide bond</keyword>
<keyword id="KW-0325">Glycoprotein</keyword>
<keyword id="KW-0646">Protease inhibitor</keyword>
<keyword id="KW-0677">Repeat</keyword>
<keyword id="KW-0964">Secreted</keyword>
<keyword id="KW-0722">Serine protease inhibitor</keyword>
<organism>
    <name type="scientific">Circus aeruginosus</name>
    <name type="common">Western marsh harrier</name>
    <name type="synonym">Falco aeruginosus</name>
    <dbReference type="NCBI Taxonomy" id="8964"/>
    <lineage>
        <taxon>Eukaryota</taxon>
        <taxon>Metazoa</taxon>
        <taxon>Chordata</taxon>
        <taxon>Craniata</taxon>
        <taxon>Vertebrata</taxon>
        <taxon>Euteleostomi</taxon>
        <taxon>Archelosauria</taxon>
        <taxon>Archosauria</taxon>
        <taxon>Dinosauria</taxon>
        <taxon>Saurischia</taxon>
        <taxon>Theropoda</taxon>
        <taxon>Coelurosauria</taxon>
        <taxon>Aves</taxon>
        <taxon>Neognathae</taxon>
        <taxon>Neoaves</taxon>
        <taxon>Telluraves</taxon>
        <taxon>Accipitrimorphae</taxon>
        <taxon>Accipitriformes</taxon>
        <taxon>Accipitridae</taxon>
        <taxon>Accipitrinae</taxon>
        <taxon>Circus</taxon>
    </lineage>
</organism>
<proteinExistence type="evidence at protein level"/>
<accession>P05579</accession>
<dbReference type="PIR" id="B31443">
    <property type="entry name" value="B31443"/>
</dbReference>
<dbReference type="SMR" id="P05579"/>
<dbReference type="iPTMnet" id="P05579"/>
<dbReference type="GO" id="GO:0005576">
    <property type="term" value="C:extracellular region"/>
    <property type="evidence" value="ECO:0007669"/>
    <property type="project" value="UniProtKB-SubCell"/>
</dbReference>
<dbReference type="GO" id="GO:0004867">
    <property type="term" value="F:serine-type endopeptidase inhibitor activity"/>
    <property type="evidence" value="ECO:0007669"/>
    <property type="project" value="UniProtKB-KW"/>
</dbReference>
<dbReference type="CDD" id="cd00104">
    <property type="entry name" value="KAZAL_FS"/>
    <property type="match status" value="1"/>
</dbReference>
<dbReference type="FunFam" id="3.30.60.30:FF:000037">
    <property type="entry name" value="Ovomucoid"/>
    <property type="match status" value="1"/>
</dbReference>
<dbReference type="Gene3D" id="3.30.60.30">
    <property type="match status" value="1"/>
</dbReference>
<dbReference type="InterPro" id="IPR051597">
    <property type="entry name" value="Bifunctional_prot_inhibitor"/>
</dbReference>
<dbReference type="InterPro" id="IPR002350">
    <property type="entry name" value="Kazal_dom"/>
</dbReference>
<dbReference type="InterPro" id="IPR036058">
    <property type="entry name" value="Kazal_dom_sf"/>
</dbReference>
<dbReference type="InterPro" id="IPR001239">
    <property type="entry name" value="Prot_inh_Kazal-m"/>
</dbReference>
<dbReference type="PANTHER" id="PTHR47729:SF1">
    <property type="entry name" value="OVOMUCOID-LIKE-RELATED"/>
    <property type="match status" value="1"/>
</dbReference>
<dbReference type="PANTHER" id="PTHR47729">
    <property type="entry name" value="SERINE PEPTIDASE INHIBITOR, KAZAL TYPE 2, TANDEM DUPLICATE 1-RELATED"/>
    <property type="match status" value="1"/>
</dbReference>
<dbReference type="Pfam" id="PF00050">
    <property type="entry name" value="Kazal_1"/>
    <property type="match status" value="1"/>
</dbReference>
<dbReference type="PRINTS" id="PR00290">
    <property type="entry name" value="KAZALINHBTR"/>
</dbReference>
<dbReference type="SMART" id="SM00280">
    <property type="entry name" value="KAZAL"/>
    <property type="match status" value="1"/>
</dbReference>
<dbReference type="SUPFAM" id="SSF100895">
    <property type="entry name" value="Kazal-type serine protease inhibitors"/>
    <property type="match status" value="1"/>
</dbReference>
<dbReference type="PROSITE" id="PS00282">
    <property type="entry name" value="KAZAL_1"/>
    <property type="match status" value="1"/>
</dbReference>
<dbReference type="PROSITE" id="PS51465">
    <property type="entry name" value="KAZAL_2"/>
    <property type="match status" value="1"/>
</dbReference>